<sequence length="332" mass="38358">MGGEQEEERFDGMLLAMAQQHEGGVQELVNTFFSFLRRKTDFFIGGEEGMAEKLITQTFNHHNQLAQKARREKRARQETERREKAERAARLAKEAKAETPGPQIKELTDEEAERLQLEIDQKKDAEDQEAQLKNGSLDSPGKQDAEDEEDEEDEKDKGKLKPNLGNGADLPNYRWTQTLAELDLAVPFRVSFRLKGKDVVVDIQRRHLRVGLKGQPPVVDGELYNEVKVEESSWLIEDGKVVTVHLEKINKMEWWNRLVTSDPEINTKKINPENSKLSDLDSETRSMVEKMMYDQRQKSMGLPTSDEQKKQEILKKFMDQHPEMDFSKAKFN</sequence>
<organism>
    <name type="scientific">Mus musculus</name>
    <name type="common">Mouse</name>
    <dbReference type="NCBI Taxonomy" id="10090"/>
    <lineage>
        <taxon>Eukaryota</taxon>
        <taxon>Metazoa</taxon>
        <taxon>Chordata</taxon>
        <taxon>Craniata</taxon>
        <taxon>Vertebrata</taxon>
        <taxon>Euteleostomi</taxon>
        <taxon>Mammalia</taxon>
        <taxon>Eutheria</taxon>
        <taxon>Euarchontoglires</taxon>
        <taxon>Glires</taxon>
        <taxon>Rodentia</taxon>
        <taxon>Myomorpha</taxon>
        <taxon>Muroidea</taxon>
        <taxon>Muridae</taxon>
        <taxon>Murinae</taxon>
        <taxon>Mus</taxon>
        <taxon>Mus</taxon>
    </lineage>
</organism>
<comment type="function">
    <text evidence="2 6">Plays a role in neurogenesis and neuronal migration (PubMed:11734602). Necessary for correct formation of mitotic spindles and chromosome separation during mitosis (By similarity). Necessary for cytokinesis and cell proliferation (By similarity).</text>
</comment>
<comment type="subunit">
    <text evidence="2 6 8">Interacts with PLK1 (By similarity). Interacts with PAFAH1B1 (PubMed:9601647). Part of a complex containing PLK1, NUDC, dynein and dynactin (PubMed:11734602). Interacts with DCDC1 (By similarity). Interacts with EML4 (via WD repeats) (By similarity).</text>
</comment>
<comment type="interaction">
    <interactant intactId="EBI-911192">
        <id>O35685</id>
    </interactant>
    <interactant intactId="EBI-776129">
        <id>Q61768</id>
        <label>Kif5b</label>
    </interactant>
    <organismsDiffer>false</organismsDiffer>
    <experiments>4</experiments>
</comment>
<comment type="interaction">
    <interactant intactId="EBI-911192">
        <id>O35685</id>
    </interactant>
    <interactant intactId="EBI-7445518">
        <id>Q61206</id>
        <label>Pafah1b2</label>
    </interactant>
    <organismsDiffer>false</organismsDiffer>
    <experiments>2</experiments>
</comment>
<comment type="subcellular location">
    <subcellularLocation>
        <location evidence="1">Cytoplasm</location>
        <location evidence="1">Cytoskeleton</location>
    </subcellularLocation>
    <subcellularLocation>
        <location evidence="1">Nucleus</location>
    </subcellularLocation>
    <subcellularLocation>
        <location evidence="2">Cytoplasm</location>
        <location evidence="2">Cytoskeleton</location>
        <location evidence="2">Spindle</location>
    </subcellularLocation>
    <subcellularLocation>
        <location evidence="2">Midbody</location>
    </subcellularLocation>
    <text evidence="2">A small proportion is nuclear, in a punctate pattern (By similarity). In a filamentous pattern adjacent to the nucleus of migrating cerebellar granule cells. Colocalizes with tubulin and dynein and with the microtubule organizing center. Distributed throughout the cytoplasm of non-migrating cells (By similarity). Localizes to the mitotic spindle in a EML4-dependent manner (By similarity).</text>
</comment>
<comment type="tissue specificity">
    <text evidence="6 8">Detected in fetal and adult brain, in particular in the ventricular zone of the embryonic forebrain and in the embryonic cortical plate. Highly expressed in brain cortex from new born and adult mice. Detected in the choroid plexus and in ependymal cells in embryonic brain.</text>
</comment>
<comment type="induction">
    <text evidence="7">Up-regulated in silica-treated macrophages.</text>
</comment>
<comment type="PTM">
    <text evidence="2">Reversibly phosphorylated on serine residues during the M phase of the cell cycle. Phosphorylation on Ser-275 and Ser-327 is necessary for correct formation of mitotic spindles and chromosome separation during mitosis. Phosphorylated by PLK and other kinases (By similarity).</text>
</comment>
<comment type="similarity">
    <text evidence="9">Belongs to the nudC family.</text>
</comment>
<reference key="1">
    <citation type="journal article" date="1995" name="J. Immunol.">
        <title>Isolation of nine gene sequences induced by silica in murine macrophages.</title>
        <authorList>
            <person name="Segade F."/>
            <person name="Claudio E."/>
            <person name="Wrobel K."/>
            <person name="Ramos S."/>
            <person name="Lazo P.S."/>
        </authorList>
    </citation>
    <scope>NUCLEOTIDE SEQUENCE [MRNA]</scope>
    <scope>INDUCTION</scope>
    <source>
        <tissue>Macrophage</tissue>
    </source>
</reference>
<reference key="2">
    <citation type="journal article" date="1998" name="Curr. Biol.">
        <title>The lissenchephaly gene product Lis1, a protein involved in neuronal migration, interacts with a nuclear movement protein, NudC.</title>
        <authorList>
            <person name="Morris S.M."/>
            <person name="Albrecht U."/>
            <person name="Reiner O."/>
            <person name="Eichele G."/>
            <person name="Yu-Lee L.-Y."/>
        </authorList>
    </citation>
    <scope>NUCLEOTIDE SEQUENCE [MRNA]</scope>
    <scope>INTERACTION WITH PAFAH1B1</scope>
    <scope>TISSUE SPECIFICITY</scope>
    <source>
        <strain>129/Sv</strain>
        <tissue>Lung</tissue>
        <tissue>T-cell</tissue>
    </source>
</reference>
<reference key="3">
    <citation type="journal article" date="2005" name="Science">
        <title>The transcriptional landscape of the mammalian genome.</title>
        <authorList>
            <person name="Carninci P."/>
            <person name="Kasukawa T."/>
            <person name="Katayama S."/>
            <person name="Gough J."/>
            <person name="Frith M.C."/>
            <person name="Maeda N."/>
            <person name="Oyama R."/>
            <person name="Ravasi T."/>
            <person name="Lenhard B."/>
            <person name="Wells C."/>
            <person name="Kodzius R."/>
            <person name="Shimokawa K."/>
            <person name="Bajic V.B."/>
            <person name="Brenner S.E."/>
            <person name="Batalov S."/>
            <person name="Forrest A.R."/>
            <person name="Zavolan M."/>
            <person name="Davis M.J."/>
            <person name="Wilming L.G."/>
            <person name="Aidinis V."/>
            <person name="Allen J.E."/>
            <person name="Ambesi-Impiombato A."/>
            <person name="Apweiler R."/>
            <person name="Aturaliya R.N."/>
            <person name="Bailey T.L."/>
            <person name="Bansal M."/>
            <person name="Baxter L."/>
            <person name="Beisel K.W."/>
            <person name="Bersano T."/>
            <person name="Bono H."/>
            <person name="Chalk A.M."/>
            <person name="Chiu K.P."/>
            <person name="Choudhary V."/>
            <person name="Christoffels A."/>
            <person name="Clutterbuck D.R."/>
            <person name="Crowe M.L."/>
            <person name="Dalla E."/>
            <person name="Dalrymple B.P."/>
            <person name="de Bono B."/>
            <person name="Della Gatta G."/>
            <person name="di Bernardo D."/>
            <person name="Down T."/>
            <person name="Engstrom P."/>
            <person name="Fagiolini M."/>
            <person name="Faulkner G."/>
            <person name="Fletcher C.F."/>
            <person name="Fukushima T."/>
            <person name="Furuno M."/>
            <person name="Futaki S."/>
            <person name="Gariboldi M."/>
            <person name="Georgii-Hemming P."/>
            <person name="Gingeras T.R."/>
            <person name="Gojobori T."/>
            <person name="Green R.E."/>
            <person name="Gustincich S."/>
            <person name="Harbers M."/>
            <person name="Hayashi Y."/>
            <person name="Hensch T.K."/>
            <person name="Hirokawa N."/>
            <person name="Hill D."/>
            <person name="Huminiecki L."/>
            <person name="Iacono M."/>
            <person name="Ikeo K."/>
            <person name="Iwama A."/>
            <person name="Ishikawa T."/>
            <person name="Jakt M."/>
            <person name="Kanapin A."/>
            <person name="Katoh M."/>
            <person name="Kawasawa Y."/>
            <person name="Kelso J."/>
            <person name="Kitamura H."/>
            <person name="Kitano H."/>
            <person name="Kollias G."/>
            <person name="Krishnan S.P."/>
            <person name="Kruger A."/>
            <person name="Kummerfeld S.K."/>
            <person name="Kurochkin I.V."/>
            <person name="Lareau L.F."/>
            <person name="Lazarevic D."/>
            <person name="Lipovich L."/>
            <person name="Liu J."/>
            <person name="Liuni S."/>
            <person name="McWilliam S."/>
            <person name="Madan Babu M."/>
            <person name="Madera M."/>
            <person name="Marchionni L."/>
            <person name="Matsuda H."/>
            <person name="Matsuzawa S."/>
            <person name="Miki H."/>
            <person name="Mignone F."/>
            <person name="Miyake S."/>
            <person name="Morris K."/>
            <person name="Mottagui-Tabar S."/>
            <person name="Mulder N."/>
            <person name="Nakano N."/>
            <person name="Nakauchi H."/>
            <person name="Ng P."/>
            <person name="Nilsson R."/>
            <person name="Nishiguchi S."/>
            <person name="Nishikawa S."/>
            <person name="Nori F."/>
            <person name="Ohara O."/>
            <person name="Okazaki Y."/>
            <person name="Orlando V."/>
            <person name="Pang K.C."/>
            <person name="Pavan W.J."/>
            <person name="Pavesi G."/>
            <person name="Pesole G."/>
            <person name="Petrovsky N."/>
            <person name="Piazza S."/>
            <person name="Reed J."/>
            <person name="Reid J.F."/>
            <person name="Ring B.Z."/>
            <person name="Ringwald M."/>
            <person name="Rost B."/>
            <person name="Ruan Y."/>
            <person name="Salzberg S.L."/>
            <person name="Sandelin A."/>
            <person name="Schneider C."/>
            <person name="Schoenbach C."/>
            <person name="Sekiguchi K."/>
            <person name="Semple C.A."/>
            <person name="Seno S."/>
            <person name="Sessa L."/>
            <person name="Sheng Y."/>
            <person name="Shibata Y."/>
            <person name="Shimada H."/>
            <person name="Shimada K."/>
            <person name="Silva D."/>
            <person name="Sinclair B."/>
            <person name="Sperling S."/>
            <person name="Stupka E."/>
            <person name="Sugiura K."/>
            <person name="Sultana R."/>
            <person name="Takenaka Y."/>
            <person name="Taki K."/>
            <person name="Tammoja K."/>
            <person name="Tan S.L."/>
            <person name="Tang S."/>
            <person name="Taylor M.S."/>
            <person name="Tegner J."/>
            <person name="Teichmann S.A."/>
            <person name="Ueda H.R."/>
            <person name="van Nimwegen E."/>
            <person name="Verardo R."/>
            <person name="Wei C.L."/>
            <person name="Yagi K."/>
            <person name="Yamanishi H."/>
            <person name="Zabarovsky E."/>
            <person name="Zhu S."/>
            <person name="Zimmer A."/>
            <person name="Hide W."/>
            <person name="Bult C."/>
            <person name="Grimmond S.M."/>
            <person name="Teasdale R.D."/>
            <person name="Liu E.T."/>
            <person name="Brusic V."/>
            <person name="Quackenbush J."/>
            <person name="Wahlestedt C."/>
            <person name="Mattick J.S."/>
            <person name="Hume D.A."/>
            <person name="Kai C."/>
            <person name="Sasaki D."/>
            <person name="Tomaru Y."/>
            <person name="Fukuda S."/>
            <person name="Kanamori-Katayama M."/>
            <person name="Suzuki M."/>
            <person name="Aoki J."/>
            <person name="Arakawa T."/>
            <person name="Iida J."/>
            <person name="Imamura K."/>
            <person name="Itoh M."/>
            <person name="Kato T."/>
            <person name="Kawaji H."/>
            <person name="Kawagashira N."/>
            <person name="Kawashima T."/>
            <person name="Kojima M."/>
            <person name="Kondo S."/>
            <person name="Konno H."/>
            <person name="Nakano K."/>
            <person name="Ninomiya N."/>
            <person name="Nishio T."/>
            <person name="Okada M."/>
            <person name="Plessy C."/>
            <person name="Shibata K."/>
            <person name="Shiraki T."/>
            <person name="Suzuki S."/>
            <person name="Tagami M."/>
            <person name="Waki K."/>
            <person name="Watahiki A."/>
            <person name="Okamura-Oho Y."/>
            <person name="Suzuki H."/>
            <person name="Kawai J."/>
            <person name="Hayashizaki Y."/>
        </authorList>
    </citation>
    <scope>NUCLEOTIDE SEQUENCE [LARGE SCALE MRNA]</scope>
    <source>
        <strain>C57BL/6J</strain>
        <strain>DBA/2J</strain>
        <tissue>Cerebellum</tissue>
    </source>
</reference>
<reference key="4">
    <citation type="journal article" date="2004" name="Genome Res.">
        <title>The status, quality, and expansion of the NIH full-length cDNA project: the Mammalian Gene Collection (MGC).</title>
        <authorList>
            <consortium name="The MGC Project Team"/>
        </authorList>
    </citation>
    <scope>NUCLEOTIDE SEQUENCE [LARGE SCALE MRNA]</scope>
    <source>
        <strain>FVB/N</strain>
        <tissue>Colon</tissue>
    </source>
</reference>
<reference key="5">
    <citation type="journal article" date="2001" name="J. Neurosci.">
        <title>NudC associates with Lis1 and the dynein motor at the leading pole of neurons.</title>
        <authorList>
            <person name="Aumais J.P."/>
            <person name="Tunstead J.R."/>
            <person name="McNeil R.S."/>
            <person name="Schaar B.T."/>
            <person name="McConnell S.K."/>
            <person name="Lin S.-H."/>
            <person name="Clark G.D."/>
            <person name="Yu-Lee L.-Y."/>
        </authorList>
    </citation>
    <scope>FUNCTION</scope>
    <scope>IDENTIFICATION IN A COMPLEX WITH DYNEIN</scope>
    <scope>TISSUE SPECIFICITY</scope>
    <scope>SUBCELLULAR LOCATION</scope>
</reference>
<reference key="6">
    <citation type="journal article" date="2010" name="Cell">
        <title>A tissue-specific atlas of mouse protein phosphorylation and expression.</title>
        <authorList>
            <person name="Huttlin E.L."/>
            <person name="Jedrychowski M.P."/>
            <person name="Elias J.E."/>
            <person name="Goswami T."/>
            <person name="Rad R."/>
            <person name="Beausoleil S.A."/>
            <person name="Villen J."/>
            <person name="Haas W."/>
            <person name="Sowa M.E."/>
            <person name="Gygi S.P."/>
        </authorList>
    </citation>
    <scope>IDENTIFICATION BY MASS SPECTROMETRY [LARGE SCALE ANALYSIS]</scope>
    <source>
        <tissue>Brain</tissue>
        <tissue>Brown adipose tissue</tissue>
        <tissue>Heart</tissue>
        <tissue>Kidney</tissue>
        <tissue>Liver</tissue>
        <tissue>Lung</tissue>
        <tissue>Pancreas</tissue>
        <tissue>Spleen</tissue>
        <tissue>Testis</tissue>
    </source>
</reference>
<reference key="7">
    <citation type="submission" date="2004-11" db="PDB data bank">
        <title>Nuclear move domain of nuclear distribution gene C homolog.</title>
        <authorList>
            <consortium name="RIKEN structural genomics initiative (RSGI)"/>
        </authorList>
    </citation>
    <scope>STRUCTURE BY NMR OF 171-288</scope>
</reference>
<name>NUDC_MOUSE</name>
<feature type="chain" id="PRO_0000057991" description="Nuclear migration protein nudC">
    <location>
        <begin position="1"/>
        <end position="332"/>
    </location>
</feature>
<feature type="domain" description="CS" evidence="4">
    <location>
        <begin position="168"/>
        <end position="259"/>
    </location>
</feature>
<feature type="region of interest" description="Disordered" evidence="5">
    <location>
        <begin position="65"/>
        <end position="108"/>
    </location>
</feature>
<feature type="region of interest" description="Disordered" evidence="5">
    <location>
        <begin position="123"/>
        <end position="171"/>
    </location>
</feature>
<feature type="region of interest" description="Interaction with EML4" evidence="2">
    <location>
        <begin position="174"/>
        <end position="332"/>
    </location>
</feature>
<feature type="coiled-coil region" evidence="3">
    <location>
        <begin position="60"/>
        <end position="134"/>
    </location>
</feature>
<feature type="short sequence motif" description="Nuclear localization signal" evidence="3">
    <location>
        <begin position="68"/>
        <end position="74"/>
    </location>
</feature>
<feature type="compositionally biased region" description="Basic and acidic residues" evidence="5">
    <location>
        <begin position="75"/>
        <end position="97"/>
    </location>
</feature>
<feature type="compositionally biased region" description="Acidic residues" evidence="5">
    <location>
        <begin position="145"/>
        <end position="154"/>
    </location>
</feature>
<feature type="modified residue" description="Phosphothreonine" evidence="2">
    <location>
        <position position="108"/>
    </location>
</feature>
<feature type="modified residue" description="Phosphoserine" evidence="2">
    <location>
        <position position="136"/>
    </location>
</feature>
<feature type="modified residue" description="Phosphoserine" evidence="2">
    <location>
        <position position="139"/>
    </location>
</feature>
<feature type="modified residue" description="N6-acetyllysine" evidence="2">
    <location>
        <position position="240"/>
    </location>
</feature>
<feature type="modified residue" description="Phosphoserine" evidence="2">
    <location>
        <position position="261"/>
    </location>
</feature>
<feature type="modified residue" description="Phosphoserine" evidence="2">
    <location>
        <position position="275"/>
    </location>
</feature>
<feature type="modified residue" description="Phosphoserine" evidence="2">
    <location>
        <position position="278"/>
    </location>
</feature>
<feature type="modified residue" description="Phosphoserine" evidence="2">
    <location>
        <position position="286"/>
    </location>
</feature>
<feature type="modified residue" description="Phosphoserine" evidence="2">
    <location>
        <position position="299"/>
    </location>
</feature>
<feature type="modified residue" description="Phosphoserine" evidence="2">
    <location>
        <position position="327"/>
    </location>
</feature>
<feature type="strand" evidence="10">
    <location>
        <begin position="172"/>
        <end position="177"/>
    </location>
</feature>
<feature type="strand" evidence="10">
    <location>
        <begin position="179"/>
        <end position="186"/>
    </location>
</feature>
<feature type="strand" evidence="10">
    <location>
        <begin position="198"/>
        <end position="204"/>
    </location>
</feature>
<feature type="strand" evidence="10">
    <location>
        <begin position="207"/>
        <end position="212"/>
    </location>
</feature>
<feature type="strand" evidence="10">
    <location>
        <begin position="223"/>
        <end position="225"/>
    </location>
</feature>
<feature type="turn" evidence="11">
    <location>
        <begin position="229"/>
        <end position="231"/>
    </location>
</feature>
<feature type="strand" evidence="10">
    <location>
        <begin position="233"/>
        <end position="237"/>
    </location>
</feature>
<feature type="turn" evidence="10">
    <location>
        <begin position="238"/>
        <end position="240"/>
    </location>
</feature>
<feature type="strand" evidence="10">
    <location>
        <begin position="241"/>
        <end position="251"/>
    </location>
</feature>
<feature type="strand" evidence="10">
    <location>
        <begin position="258"/>
        <end position="261"/>
    </location>
</feature>
<feature type="strand" evidence="10">
    <location>
        <begin position="268"/>
        <end position="271"/>
    </location>
</feature>
<dbReference type="EMBL" id="X81443">
    <property type="protein sequence ID" value="CAA57201.1"/>
    <property type="molecule type" value="mRNA"/>
</dbReference>
<dbReference type="EMBL" id="Y15522">
    <property type="protein sequence ID" value="CAA75677.1"/>
    <property type="molecule type" value="mRNA"/>
</dbReference>
<dbReference type="EMBL" id="AK032673">
    <property type="protein sequence ID" value="BAC27981.1"/>
    <property type="molecule type" value="mRNA"/>
</dbReference>
<dbReference type="EMBL" id="AK146323">
    <property type="protein sequence ID" value="BAE27078.1"/>
    <property type="molecule type" value="mRNA"/>
</dbReference>
<dbReference type="EMBL" id="BC011253">
    <property type="protein sequence ID" value="AAH11253.1"/>
    <property type="molecule type" value="mRNA"/>
</dbReference>
<dbReference type="CCDS" id="CCDS18750.1"/>
<dbReference type="RefSeq" id="NP_035078.1">
    <property type="nucleotide sequence ID" value="NM_010948.3"/>
</dbReference>
<dbReference type="PDB" id="1WFI">
    <property type="method" value="NMR"/>
    <property type="chains" value="A=171-288"/>
</dbReference>
<dbReference type="PDB" id="2CR0">
    <property type="method" value="NMR"/>
    <property type="chains" value="A=161-268"/>
</dbReference>
<dbReference type="PDBsum" id="1WFI"/>
<dbReference type="PDBsum" id="2CR0"/>
<dbReference type="SMR" id="O35685"/>
<dbReference type="BioGRID" id="201876">
    <property type="interactions" value="30"/>
</dbReference>
<dbReference type="FunCoup" id="O35685">
    <property type="interactions" value="3579"/>
</dbReference>
<dbReference type="IntAct" id="O35685">
    <property type="interactions" value="8"/>
</dbReference>
<dbReference type="MINT" id="O35685"/>
<dbReference type="STRING" id="10090.ENSMUSP00000030665"/>
<dbReference type="iPTMnet" id="O35685"/>
<dbReference type="MetOSite" id="O35685"/>
<dbReference type="PhosphoSitePlus" id="O35685"/>
<dbReference type="SwissPalm" id="O35685"/>
<dbReference type="REPRODUCTION-2DPAGE" id="O35685"/>
<dbReference type="jPOST" id="O35685"/>
<dbReference type="PaxDb" id="10090-ENSMUSP00000030665"/>
<dbReference type="PeptideAtlas" id="O35685"/>
<dbReference type="ProteomicsDB" id="287852"/>
<dbReference type="Pumba" id="O35685"/>
<dbReference type="Antibodypedia" id="30707">
    <property type="antibodies" value="408 antibodies from 36 providers"/>
</dbReference>
<dbReference type="DNASU" id="18221"/>
<dbReference type="Ensembl" id="ENSMUST00000030665.7">
    <property type="protein sequence ID" value="ENSMUSP00000030665.7"/>
    <property type="gene ID" value="ENSMUSG00000028851.7"/>
</dbReference>
<dbReference type="GeneID" id="18221"/>
<dbReference type="KEGG" id="mmu:18221"/>
<dbReference type="UCSC" id="uc012dmm.1">
    <property type="organism name" value="mouse"/>
</dbReference>
<dbReference type="AGR" id="MGI:106014"/>
<dbReference type="CTD" id="10726"/>
<dbReference type="MGI" id="MGI:106014">
    <property type="gene designation" value="Nudc"/>
</dbReference>
<dbReference type="VEuPathDB" id="HostDB:ENSMUSG00000028851"/>
<dbReference type="eggNOG" id="KOG2265">
    <property type="taxonomic scope" value="Eukaryota"/>
</dbReference>
<dbReference type="GeneTree" id="ENSGT00940000155361"/>
<dbReference type="HOGENOM" id="CLU_047332_1_0_1"/>
<dbReference type="InParanoid" id="O35685"/>
<dbReference type="OMA" id="NQMEWWS"/>
<dbReference type="OrthoDB" id="416217at2759"/>
<dbReference type="PhylomeDB" id="O35685"/>
<dbReference type="TreeFam" id="TF300147"/>
<dbReference type="Reactome" id="R-MMU-141444">
    <property type="pathway name" value="Amplification of signal from unattached kinetochores via a MAD2 inhibitory signal"/>
</dbReference>
<dbReference type="Reactome" id="R-MMU-2467813">
    <property type="pathway name" value="Separation of Sister Chromatids"/>
</dbReference>
<dbReference type="Reactome" id="R-MMU-2500257">
    <property type="pathway name" value="Resolution of Sister Chromatid Cohesion"/>
</dbReference>
<dbReference type="Reactome" id="R-MMU-5663220">
    <property type="pathway name" value="RHO GTPases Activate Formins"/>
</dbReference>
<dbReference type="Reactome" id="R-MMU-68877">
    <property type="pathway name" value="Mitotic Prometaphase"/>
</dbReference>
<dbReference type="Reactome" id="R-MMU-9648025">
    <property type="pathway name" value="EML4 and NUDC in mitotic spindle formation"/>
</dbReference>
<dbReference type="Reactome" id="R-MMU-9696270">
    <property type="pathway name" value="RND2 GTPase cycle"/>
</dbReference>
<dbReference type="BioGRID-ORCS" id="18221">
    <property type="hits" value="23 hits in 75 CRISPR screens"/>
</dbReference>
<dbReference type="ChiTaRS" id="Nudc">
    <property type="organism name" value="mouse"/>
</dbReference>
<dbReference type="EvolutionaryTrace" id="O35685"/>
<dbReference type="PRO" id="PR:O35685"/>
<dbReference type="Proteomes" id="UP000000589">
    <property type="component" value="Chromosome 4"/>
</dbReference>
<dbReference type="RNAct" id="O35685">
    <property type="molecule type" value="protein"/>
</dbReference>
<dbReference type="Bgee" id="ENSMUSG00000028851">
    <property type="expression patterns" value="Expressed in yolk sac and 121 other cell types or tissues"/>
</dbReference>
<dbReference type="GO" id="GO:0005829">
    <property type="term" value="C:cytosol"/>
    <property type="evidence" value="ECO:0007669"/>
    <property type="project" value="Ensembl"/>
</dbReference>
<dbReference type="GO" id="GO:0005874">
    <property type="term" value="C:microtubule"/>
    <property type="evidence" value="ECO:0007669"/>
    <property type="project" value="UniProtKB-KW"/>
</dbReference>
<dbReference type="GO" id="GO:0030496">
    <property type="term" value="C:midbody"/>
    <property type="evidence" value="ECO:0000250"/>
    <property type="project" value="UniProtKB"/>
</dbReference>
<dbReference type="GO" id="GO:0072686">
    <property type="term" value="C:mitotic spindle"/>
    <property type="evidence" value="ECO:0000250"/>
    <property type="project" value="UniProtKB"/>
</dbReference>
<dbReference type="GO" id="GO:0005634">
    <property type="term" value="C:nucleus"/>
    <property type="evidence" value="ECO:0007669"/>
    <property type="project" value="UniProtKB-SubCell"/>
</dbReference>
<dbReference type="GO" id="GO:0051301">
    <property type="term" value="P:cell division"/>
    <property type="evidence" value="ECO:0007669"/>
    <property type="project" value="UniProtKB-KW"/>
</dbReference>
<dbReference type="GO" id="GO:0007080">
    <property type="term" value="P:mitotic metaphase chromosome alignment"/>
    <property type="evidence" value="ECO:0000250"/>
    <property type="project" value="UniProtKB"/>
</dbReference>
<dbReference type="GO" id="GO:0007052">
    <property type="term" value="P:mitotic spindle organization"/>
    <property type="evidence" value="ECO:0000250"/>
    <property type="project" value="UniProtKB"/>
</dbReference>
<dbReference type="GO" id="GO:0007097">
    <property type="term" value="P:nuclear migration"/>
    <property type="evidence" value="ECO:0007669"/>
    <property type="project" value="Ensembl"/>
</dbReference>
<dbReference type="GO" id="GO:0043434">
    <property type="term" value="P:response to peptide hormone"/>
    <property type="evidence" value="ECO:0007669"/>
    <property type="project" value="Ensembl"/>
</dbReference>
<dbReference type="CDD" id="cd06492">
    <property type="entry name" value="p23_mNUDC_like"/>
    <property type="match status" value="1"/>
</dbReference>
<dbReference type="FunFam" id="2.60.40.790:FF:000001">
    <property type="entry name" value="Nuclear migration protein nudC"/>
    <property type="match status" value="1"/>
</dbReference>
<dbReference type="Gene3D" id="2.60.40.790">
    <property type="match status" value="1"/>
</dbReference>
<dbReference type="InterPro" id="IPR007052">
    <property type="entry name" value="CS_dom"/>
</dbReference>
<dbReference type="InterPro" id="IPR008978">
    <property type="entry name" value="HSP20-like_chaperone"/>
</dbReference>
<dbReference type="InterPro" id="IPR032572">
    <property type="entry name" value="NuDC"/>
</dbReference>
<dbReference type="InterPro" id="IPR037898">
    <property type="entry name" value="NudC_fam"/>
</dbReference>
<dbReference type="InterPro" id="IPR025934">
    <property type="entry name" value="NudC_N_dom"/>
</dbReference>
<dbReference type="PANTHER" id="PTHR12356:SF3">
    <property type="entry name" value="NUCLEAR MIGRATION PROTEIN NUDC"/>
    <property type="match status" value="1"/>
</dbReference>
<dbReference type="PANTHER" id="PTHR12356">
    <property type="entry name" value="NUCLEAR MOVEMENT PROTEIN NUDC"/>
    <property type="match status" value="1"/>
</dbReference>
<dbReference type="Pfam" id="PF04969">
    <property type="entry name" value="CS"/>
    <property type="match status" value="1"/>
</dbReference>
<dbReference type="Pfam" id="PF16273">
    <property type="entry name" value="NuDC"/>
    <property type="match status" value="1"/>
</dbReference>
<dbReference type="Pfam" id="PF14050">
    <property type="entry name" value="Nudc_N"/>
    <property type="match status" value="1"/>
</dbReference>
<dbReference type="SUPFAM" id="SSF49764">
    <property type="entry name" value="HSP20-like chaperones"/>
    <property type="match status" value="1"/>
</dbReference>
<dbReference type="PROSITE" id="PS51203">
    <property type="entry name" value="CS"/>
    <property type="match status" value="1"/>
</dbReference>
<gene>
    <name type="primary">Nudc</name>
</gene>
<accession>O35685</accession>
<accession>Q3UJS7</accession>
<proteinExistence type="evidence at protein level"/>
<keyword id="KW-0002">3D-structure</keyword>
<keyword id="KW-0007">Acetylation</keyword>
<keyword id="KW-0131">Cell cycle</keyword>
<keyword id="KW-0132">Cell division</keyword>
<keyword id="KW-0175">Coiled coil</keyword>
<keyword id="KW-0963">Cytoplasm</keyword>
<keyword id="KW-0206">Cytoskeleton</keyword>
<keyword id="KW-0493">Microtubule</keyword>
<keyword id="KW-0498">Mitosis</keyword>
<keyword id="KW-0539">Nucleus</keyword>
<keyword id="KW-0597">Phosphoprotein</keyword>
<keyword id="KW-1185">Reference proteome</keyword>
<protein>
    <recommendedName>
        <fullName>Nuclear migration protein nudC</fullName>
    </recommendedName>
    <alternativeName>
        <fullName>Nuclear distribution protein C homolog</fullName>
    </alternativeName>
    <alternativeName>
        <fullName>Silica-induced gene 92 protein</fullName>
        <shortName>SIG-92</shortName>
    </alternativeName>
</protein>
<evidence type="ECO:0000250" key="1"/>
<evidence type="ECO:0000250" key="2">
    <source>
        <dbReference type="UniProtKB" id="Q9Y266"/>
    </source>
</evidence>
<evidence type="ECO:0000255" key="3"/>
<evidence type="ECO:0000255" key="4">
    <source>
        <dbReference type="PROSITE-ProRule" id="PRU00547"/>
    </source>
</evidence>
<evidence type="ECO:0000256" key="5">
    <source>
        <dbReference type="SAM" id="MobiDB-lite"/>
    </source>
</evidence>
<evidence type="ECO:0000269" key="6">
    <source>
    </source>
</evidence>
<evidence type="ECO:0000269" key="7">
    <source>
    </source>
</evidence>
<evidence type="ECO:0000269" key="8">
    <source>
    </source>
</evidence>
<evidence type="ECO:0000305" key="9"/>
<evidence type="ECO:0007829" key="10">
    <source>
        <dbReference type="PDB" id="1WFI"/>
    </source>
</evidence>
<evidence type="ECO:0007829" key="11">
    <source>
        <dbReference type="PDB" id="2CR0"/>
    </source>
</evidence>